<proteinExistence type="inferred from homology"/>
<organism>
    <name type="scientific">Shigella flexneri serotype 5b (strain 8401)</name>
    <dbReference type="NCBI Taxonomy" id="373384"/>
    <lineage>
        <taxon>Bacteria</taxon>
        <taxon>Pseudomonadati</taxon>
        <taxon>Pseudomonadota</taxon>
        <taxon>Gammaproteobacteria</taxon>
        <taxon>Enterobacterales</taxon>
        <taxon>Enterobacteriaceae</taxon>
        <taxon>Shigella</taxon>
    </lineage>
</organism>
<reference key="1">
    <citation type="journal article" date="2006" name="BMC Genomics">
        <title>Complete genome sequence of Shigella flexneri 5b and comparison with Shigella flexneri 2a.</title>
        <authorList>
            <person name="Nie H."/>
            <person name="Yang F."/>
            <person name="Zhang X."/>
            <person name="Yang J."/>
            <person name="Chen L."/>
            <person name="Wang J."/>
            <person name="Xiong Z."/>
            <person name="Peng J."/>
            <person name="Sun L."/>
            <person name="Dong J."/>
            <person name="Xue Y."/>
            <person name="Xu X."/>
            <person name="Chen S."/>
            <person name="Yao Z."/>
            <person name="Shen Y."/>
            <person name="Jin Q."/>
        </authorList>
    </citation>
    <scope>NUCLEOTIDE SEQUENCE [LARGE SCALE GENOMIC DNA]</scope>
    <source>
        <strain>8401</strain>
    </source>
</reference>
<accession>Q0SYG2</accession>
<protein>
    <recommendedName>
        <fullName evidence="1">Phosphopantetheine adenylyltransferase</fullName>
        <ecNumber evidence="1">2.7.7.3</ecNumber>
    </recommendedName>
    <alternativeName>
        <fullName evidence="1">Dephospho-CoA pyrophosphorylase</fullName>
    </alternativeName>
    <alternativeName>
        <fullName evidence="1">Pantetheine-phosphate adenylyltransferase</fullName>
        <shortName evidence="1">PPAT</shortName>
    </alternativeName>
</protein>
<comment type="function">
    <text evidence="1">Reversibly transfers an adenylyl group from ATP to 4'-phosphopantetheine, yielding dephospho-CoA (dPCoA) and pyrophosphate.</text>
</comment>
<comment type="catalytic activity">
    <reaction evidence="1">
        <text>(R)-4'-phosphopantetheine + ATP + H(+) = 3'-dephospho-CoA + diphosphate</text>
        <dbReference type="Rhea" id="RHEA:19801"/>
        <dbReference type="ChEBI" id="CHEBI:15378"/>
        <dbReference type="ChEBI" id="CHEBI:30616"/>
        <dbReference type="ChEBI" id="CHEBI:33019"/>
        <dbReference type="ChEBI" id="CHEBI:57328"/>
        <dbReference type="ChEBI" id="CHEBI:61723"/>
        <dbReference type="EC" id="2.7.7.3"/>
    </reaction>
</comment>
<comment type="cofactor">
    <cofactor evidence="1">
        <name>Mg(2+)</name>
        <dbReference type="ChEBI" id="CHEBI:18420"/>
    </cofactor>
</comment>
<comment type="pathway">
    <text evidence="1">Cofactor biosynthesis; coenzyme A biosynthesis; CoA from (R)-pantothenate: step 4/5.</text>
</comment>
<comment type="subunit">
    <text evidence="1">Homohexamer.</text>
</comment>
<comment type="subcellular location">
    <subcellularLocation>
        <location evidence="1">Cytoplasm</location>
    </subcellularLocation>
</comment>
<comment type="similarity">
    <text evidence="1">Belongs to the bacterial CoaD family.</text>
</comment>
<feature type="chain" id="PRO_1000011240" description="Phosphopantetheine adenylyltransferase">
    <location>
        <begin position="1"/>
        <end position="159"/>
    </location>
</feature>
<feature type="binding site" evidence="1">
    <location>
        <begin position="10"/>
        <end position="11"/>
    </location>
    <ligand>
        <name>ATP</name>
        <dbReference type="ChEBI" id="CHEBI:30616"/>
    </ligand>
</feature>
<feature type="binding site" evidence="1">
    <location>
        <position position="10"/>
    </location>
    <ligand>
        <name>substrate</name>
    </ligand>
</feature>
<feature type="binding site" evidence="1">
    <location>
        <position position="18"/>
    </location>
    <ligand>
        <name>ATP</name>
        <dbReference type="ChEBI" id="CHEBI:30616"/>
    </ligand>
</feature>
<feature type="binding site" evidence="1">
    <location>
        <position position="42"/>
    </location>
    <ligand>
        <name>substrate</name>
    </ligand>
</feature>
<feature type="binding site" evidence="1">
    <location>
        <position position="74"/>
    </location>
    <ligand>
        <name>substrate</name>
    </ligand>
</feature>
<feature type="binding site" evidence="1">
    <location>
        <position position="88"/>
    </location>
    <ligand>
        <name>substrate</name>
    </ligand>
</feature>
<feature type="binding site" evidence="1">
    <location>
        <begin position="89"/>
        <end position="91"/>
    </location>
    <ligand>
        <name>ATP</name>
        <dbReference type="ChEBI" id="CHEBI:30616"/>
    </ligand>
</feature>
<feature type="binding site" evidence="1">
    <location>
        <position position="99"/>
    </location>
    <ligand>
        <name>ATP</name>
        <dbReference type="ChEBI" id="CHEBI:30616"/>
    </ligand>
</feature>
<feature type="binding site" evidence="1">
    <location>
        <begin position="124"/>
        <end position="130"/>
    </location>
    <ligand>
        <name>ATP</name>
        <dbReference type="ChEBI" id="CHEBI:30616"/>
    </ligand>
</feature>
<feature type="site" description="Transition state stabilizer" evidence="1">
    <location>
        <position position="18"/>
    </location>
</feature>
<evidence type="ECO:0000255" key="1">
    <source>
        <dbReference type="HAMAP-Rule" id="MF_00151"/>
    </source>
</evidence>
<name>COAD_SHIF8</name>
<keyword id="KW-0067">ATP-binding</keyword>
<keyword id="KW-0173">Coenzyme A biosynthesis</keyword>
<keyword id="KW-0963">Cytoplasm</keyword>
<keyword id="KW-0460">Magnesium</keyword>
<keyword id="KW-0547">Nucleotide-binding</keyword>
<keyword id="KW-0548">Nucleotidyltransferase</keyword>
<keyword id="KW-0808">Transferase</keyword>
<gene>
    <name evidence="1" type="primary">coaD</name>
    <name type="ordered locus">SFV_3895</name>
</gene>
<dbReference type="EC" id="2.7.7.3" evidence="1"/>
<dbReference type="EMBL" id="CP000266">
    <property type="protein sequence ID" value="ABF05903.1"/>
    <property type="molecule type" value="Genomic_DNA"/>
</dbReference>
<dbReference type="RefSeq" id="WP_001171866.1">
    <property type="nucleotide sequence ID" value="NC_008258.1"/>
</dbReference>
<dbReference type="SMR" id="Q0SYG2"/>
<dbReference type="GeneID" id="75202203"/>
<dbReference type="KEGG" id="sfv:SFV_3895"/>
<dbReference type="HOGENOM" id="CLU_100149_0_1_6"/>
<dbReference type="UniPathway" id="UPA00241">
    <property type="reaction ID" value="UER00355"/>
</dbReference>
<dbReference type="Proteomes" id="UP000000659">
    <property type="component" value="Chromosome"/>
</dbReference>
<dbReference type="GO" id="GO:0005737">
    <property type="term" value="C:cytoplasm"/>
    <property type="evidence" value="ECO:0007669"/>
    <property type="project" value="UniProtKB-SubCell"/>
</dbReference>
<dbReference type="GO" id="GO:0005524">
    <property type="term" value="F:ATP binding"/>
    <property type="evidence" value="ECO:0007669"/>
    <property type="project" value="UniProtKB-KW"/>
</dbReference>
<dbReference type="GO" id="GO:0004595">
    <property type="term" value="F:pantetheine-phosphate adenylyltransferase activity"/>
    <property type="evidence" value="ECO:0007669"/>
    <property type="project" value="UniProtKB-UniRule"/>
</dbReference>
<dbReference type="GO" id="GO:0015937">
    <property type="term" value="P:coenzyme A biosynthetic process"/>
    <property type="evidence" value="ECO:0007669"/>
    <property type="project" value="UniProtKB-UniRule"/>
</dbReference>
<dbReference type="CDD" id="cd02163">
    <property type="entry name" value="PPAT"/>
    <property type="match status" value="1"/>
</dbReference>
<dbReference type="FunFam" id="3.40.50.620:FF:000012">
    <property type="entry name" value="Phosphopantetheine adenylyltransferase"/>
    <property type="match status" value="1"/>
</dbReference>
<dbReference type="Gene3D" id="3.40.50.620">
    <property type="entry name" value="HUPs"/>
    <property type="match status" value="1"/>
</dbReference>
<dbReference type="HAMAP" id="MF_00151">
    <property type="entry name" value="PPAT_bact"/>
    <property type="match status" value="1"/>
</dbReference>
<dbReference type="InterPro" id="IPR004821">
    <property type="entry name" value="Cyt_trans-like"/>
</dbReference>
<dbReference type="InterPro" id="IPR001980">
    <property type="entry name" value="PPAT"/>
</dbReference>
<dbReference type="InterPro" id="IPR014729">
    <property type="entry name" value="Rossmann-like_a/b/a_fold"/>
</dbReference>
<dbReference type="NCBIfam" id="TIGR01510">
    <property type="entry name" value="coaD_prev_kdtB"/>
    <property type="match status" value="1"/>
</dbReference>
<dbReference type="NCBIfam" id="TIGR00125">
    <property type="entry name" value="cyt_tran_rel"/>
    <property type="match status" value="1"/>
</dbReference>
<dbReference type="PANTHER" id="PTHR21342">
    <property type="entry name" value="PHOSPHOPANTETHEINE ADENYLYLTRANSFERASE"/>
    <property type="match status" value="1"/>
</dbReference>
<dbReference type="PANTHER" id="PTHR21342:SF1">
    <property type="entry name" value="PHOSPHOPANTETHEINE ADENYLYLTRANSFERASE"/>
    <property type="match status" value="1"/>
</dbReference>
<dbReference type="Pfam" id="PF01467">
    <property type="entry name" value="CTP_transf_like"/>
    <property type="match status" value="1"/>
</dbReference>
<dbReference type="PRINTS" id="PR01020">
    <property type="entry name" value="LPSBIOSNTHSS"/>
</dbReference>
<dbReference type="SUPFAM" id="SSF52374">
    <property type="entry name" value="Nucleotidylyl transferase"/>
    <property type="match status" value="1"/>
</dbReference>
<sequence length="159" mass="17837">MQKRAIYPGTFDPITNGHIDIVTRATQMFDHVILAIAASPSKKPMFTLEERVALAQQATAHLGNVEVVGFSDLMANFARNQHATVLIRGLRAVADFEYEMQLAHMNRHLMPELESVFLMPSKEWSFISSSLVKEVARHQGDVTHFLPENVHQALMAKLA</sequence>